<evidence type="ECO:0000250" key="1"/>
<evidence type="ECO:0000255" key="2">
    <source>
        <dbReference type="HAMAP-Rule" id="MF_00223"/>
    </source>
</evidence>
<comment type="catalytic activity">
    <reaction evidence="2">
        <text>GTP + H2O = 7,8-dihydroneopterin 3'-triphosphate + formate + H(+)</text>
        <dbReference type="Rhea" id="RHEA:17473"/>
        <dbReference type="ChEBI" id="CHEBI:15377"/>
        <dbReference type="ChEBI" id="CHEBI:15378"/>
        <dbReference type="ChEBI" id="CHEBI:15740"/>
        <dbReference type="ChEBI" id="CHEBI:37565"/>
        <dbReference type="ChEBI" id="CHEBI:58462"/>
        <dbReference type="EC" id="3.5.4.16"/>
    </reaction>
</comment>
<comment type="pathway">
    <text evidence="2">Cofactor biosynthesis; 7,8-dihydroneopterin triphosphate biosynthesis; 7,8-dihydroneopterin triphosphate from GTP: step 1/1.</text>
</comment>
<comment type="subunit">
    <text evidence="1">Toroid-shaped homodecamer, composed of two pentamers of five dimers.</text>
</comment>
<comment type="similarity">
    <text evidence="2">Belongs to the GTP cyclohydrolase I family.</text>
</comment>
<organism>
    <name type="scientific">Corynebacterium glutamicum (strain R)</name>
    <dbReference type="NCBI Taxonomy" id="340322"/>
    <lineage>
        <taxon>Bacteria</taxon>
        <taxon>Bacillati</taxon>
        <taxon>Actinomycetota</taxon>
        <taxon>Actinomycetes</taxon>
        <taxon>Mycobacteriales</taxon>
        <taxon>Corynebacteriaceae</taxon>
        <taxon>Corynebacterium</taxon>
    </lineage>
</organism>
<name>GCH1_CORGB</name>
<protein>
    <recommendedName>
        <fullName evidence="2">GTP cyclohydrolase 1</fullName>
        <ecNumber evidence="2">3.5.4.16</ecNumber>
    </recommendedName>
    <alternativeName>
        <fullName evidence="2">GTP cyclohydrolase I</fullName>
        <shortName evidence="2">GTP-CH-I</shortName>
    </alternativeName>
</protein>
<keyword id="KW-0342">GTP-binding</keyword>
<keyword id="KW-0378">Hydrolase</keyword>
<keyword id="KW-0479">Metal-binding</keyword>
<keyword id="KW-0547">Nucleotide-binding</keyword>
<keyword id="KW-0554">One-carbon metabolism</keyword>
<keyword id="KW-0862">Zinc</keyword>
<accession>A4QH94</accession>
<reference key="1">
    <citation type="journal article" date="2007" name="Microbiology">
        <title>Comparative analysis of the Corynebacterium glutamicum group and complete genome sequence of strain R.</title>
        <authorList>
            <person name="Yukawa H."/>
            <person name="Omumasaba C.A."/>
            <person name="Nonaka H."/>
            <person name="Kos P."/>
            <person name="Okai N."/>
            <person name="Suzuki N."/>
            <person name="Suda M."/>
            <person name="Tsuge Y."/>
            <person name="Watanabe J."/>
            <person name="Ikeda Y."/>
            <person name="Vertes A.A."/>
            <person name="Inui M."/>
        </authorList>
    </citation>
    <scope>NUCLEOTIDE SEQUENCE [LARGE SCALE GENOMIC DNA]</scope>
    <source>
        <strain>R</strain>
    </source>
</reference>
<sequence>MDNHAAVREFDEERATAAIRELLIAVGEDPDREGLLETPARVARAYKETFAGLHEDPTTVLEKTFSEGHEELVLVREIPIYSMCEHHLVPFFGVAHIGYIPGKSGKVTGLSKLARLADMLAKRPQVQERLTSQIADALVEKLDAQAVAVVIEAEHLCMAMRGIRKPGAVTTTSAVRGGFKNNAASRAEVFSLIRGH</sequence>
<gene>
    <name evidence="2" type="primary">folE</name>
    <name type="ordered locus">cgR_2596</name>
</gene>
<feature type="chain" id="PRO_1000043686" description="GTP cyclohydrolase 1">
    <location>
        <begin position="1"/>
        <end position="196"/>
    </location>
</feature>
<feature type="binding site" evidence="2">
    <location>
        <position position="84"/>
    </location>
    <ligand>
        <name>Zn(2+)</name>
        <dbReference type="ChEBI" id="CHEBI:29105"/>
    </ligand>
</feature>
<feature type="binding site" evidence="2">
    <location>
        <position position="87"/>
    </location>
    <ligand>
        <name>Zn(2+)</name>
        <dbReference type="ChEBI" id="CHEBI:29105"/>
    </ligand>
</feature>
<feature type="binding site" evidence="2">
    <location>
        <position position="157"/>
    </location>
    <ligand>
        <name>Zn(2+)</name>
        <dbReference type="ChEBI" id="CHEBI:29105"/>
    </ligand>
</feature>
<dbReference type="EC" id="3.5.4.16" evidence="2"/>
<dbReference type="EMBL" id="AP009044">
    <property type="protein sequence ID" value="BAF55610.1"/>
    <property type="molecule type" value="Genomic_DNA"/>
</dbReference>
<dbReference type="SMR" id="A4QH94"/>
<dbReference type="KEGG" id="cgt:cgR_2596"/>
<dbReference type="HOGENOM" id="CLU_049768_3_3_11"/>
<dbReference type="PhylomeDB" id="A4QH94"/>
<dbReference type="UniPathway" id="UPA00848">
    <property type="reaction ID" value="UER00151"/>
</dbReference>
<dbReference type="Proteomes" id="UP000006698">
    <property type="component" value="Chromosome"/>
</dbReference>
<dbReference type="GO" id="GO:0005737">
    <property type="term" value="C:cytoplasm"/>
    <property type="evidence" value="ECO:0007669"/>
    <property type="project" value="TreeGrafter"/>
</dbReference>
<dbReference type="GO" id="GO:0005525">
    <property type="term" value="F:GTP binding"/>
    <property type="evidence" value="ECO:0007669"/>
    <property type="project" value="UniProtKB-KW"/>
</dbReference>
<dbReference type="GO" id="GO:0003934">
    <property type="term" value="F:GTP cyclohydrolase I activity"/>
    <property type="evidence" value="ECO:0007669"/>
    <property type="project" value="UniProtKB-UniRule"/>
</dbReference>
<dbReference type="GO" id="GO:0008270">
    <property type="term" value="F:zinc ion binding"/>
    <property type="evidence" value="ECO:0007669"/>
    <property type="project" value="UniProtKB-UniRule"/>
</dbReference>
<dbReference type="GO" id="GO:0006730">
    <property type="term" value="P:one-carbon metabolic process"/>
    <property type="evidence" value="ECO:0007669"/>
    <property type="project" value="UniProtKB-UniRule"/>
</dbReference>
<dbReference type="GO" id="GO:0006729">
    <property type="term" value="P:tetrahydrobiopterin biosynthetic process"/>
    <property type="evidence" value="ECO:0007669"/>
    <property type="project" value="TreeGrafter"/>
</dbReference>
<dbReference type="GO" id="GO:0046654">
    <property type="term" value="P:tetrahydrofolate biosynthetic process"/>
    <property type="evidence" value="ECO:0007669"/>
    <property type="project" value="UniProtKB-UniRule"/>
</dbReference>
<dbReference type="FunFam" id="1.10.286.10:FF:000001">
    <property type="entry name" value="GTP cyclohydrolase 1"/>
    <property type="match status" value="1"/>
</dbReference>
<dbReference type="FunFam" id="3.30.1130.10:FF:000001">
    <property type="entry name" value="GTP cyclohydrolase 1"/>
    <property type="match status" value="1"/>
</dbReference>
<dbReference type="Gene3D" id="1.10.286.10">
    <property type="match status" value="1"/>
</dbReference>
<dbReference type="Gene3D" id="3.30.1130.10">
    <property type="match status" value="1"/>
</dbReference>
<dbReference type="HAMAP" id="MF_00223">
    <property type="entry name" value="FolE"/>
    <property type="match status" value="1"/>
</dbReference>
<dbReference type="InterPro" id="IPR043133">
    <property type="entry name" value="GTP-CH-I_C/QueF"/>
</dbReference>
<dbReference type="InterPro" id="IPR043134">
    <property type="entry name" value="GTP-CH-I_N"/>
</dbReference>
<dbReference type="InterPro" id="IPR001474">
    <property type="entry name" value="GTP_CycHdrlase_I"/>
</dbReference>
<dbReference type="InterPro" id="IPR018234">
    <property type="entry name" value="GTP_CycHdrlase_I_CS"/>
</dbReference>
<dbReference type="InterPro" id="IPR020602">
    <property type="entry name" value="GTP_CycHdrlase_I_dom"/>
</dbReference>
<dbReference type="NCBIfam" id="TIGR00063">
    <property type="entry name" value="folE"/>
    <property type="match status" value="1"/>
</dbReference>
<dbReference type="NCBIfam" id="NF006825">
    <property type="entry name" value="PRK09347.1-2"/>
    <property type="match status" value="1"/>
</dbReference>
<dbReference type="NCBIfam" id="NF006826">
    <property type="entry name" value="PRK09347.1-3"/>
    <property type="match status" value="1"/>
</dbReference>
<dbReference type="PANTHER" id="PTHR11109:SF7">
    <property type="entry name" value="GTP CYCLOHYDROLASE 1"/>
    <property type="match status" value="1"/>
</dbReference>
<dbReference type="PANTHER" id="PTHR11109">
    <property type="entry name" value="GTP CYCLOHYDROLASE I"/>
    <property type="match status" value="1"/>
</dbReference>
<dbReference type="Pfam" id="PF01227">
    <property type="entry name" value="GTP_cyclohydroI"/>
    <property type="match status" value="1"/>
</dbReference>
<dbReference type="SUPFAM" id="SSF55620">
    <property type="entry name" value="Tetrahydrobiopterin biosynthesis enzymes-like"/>
    <property type="match status" value="1"/>
</dbReference>
<dbReference type="PROSITE" id="PS00859">
    <property type="entry name" value="GTP_CYCLOHYDROL_1_1"/>
    <property type="match status" value="1"/>
</dbReference>
<dbReference type="PROSITE" id="PS00860">
    <property type="entry name" value="GTP_CYCLOHYDROL_1_2"/>
    <property type="match status" value="1"/>
</dbReference>
<proteinExistence type="inferred from homology"/>